<reference key="1">
    <citation type="submission" date="2005-09" db="EMBL/GenBank/DDBJ databases">
        <title>Complete sequence of chromosome 1 of Rhodobacter sphaeroides 2.4.1.</title>
        <authorList>
            <person name="Copeland A."/>
            <person name="Lucas S."/>
            <person name="Lapidus A."/>
            <person name="Barry K."/>
            <person name="Detter J.C."/>
            <person name="Glavina T."/>
            <person name="Hammon N."/>
            <person name="Israni S."/>
            <person name="Pitluck S."/>
            <person name="Richardson P."/>
            <person name="Mackenzie C."/>
            <person name="Choudhary M."/>
            <person name="Larimer F."/>
            <person name="Hauser L.J."/>
            <person name="Land M."/>
            <person name="Donohue T.J."/>
            <person name="Kaplan S."/>
        </authorList>
    </citation>
    <scope>NUCLEOTIDE SEQUENCE [LARGE SCALE GENOMIC DNA]</scope>
    <source>
        <strain>ATCC 17023 / DSM 158 / JCM 6121 / CCUG 31486 / LMG 2827 / NBRC 12203 / NCIMB 8253 / ATH 2.4.1.</strain>
    </source>
</reference>
<keyword id="KW-1185">Reference proteome</keyword>
<keyword id="KW-0687">Ribonucleoprotein</keyword>
<keyword id="KW-0689">Ribosomal protein</keyword>
<keyword id="KW-0694">RNA-binding</keyword>
<keyword id="KW-0699">rRNA-binding</keyword>
<dbReference type="EMBL" id="CP000143">
    <property type="protein sequence ID" value="ABA77865.1"/>
    <property type="molecule type" value="Genomic_DNA"/>
</dbReference>
<dbReference type="RefSeq" id="WP_002722495.1">
    <property type="nucleotide sequence ID" value="NZ_CP030271.1"/>
</dbReference>
<dbReference type="RefSeq" id="YP_351766.1">
    <property type="nucleotide sequence ID" value="NC_007493.2"/>
</dbReference>
<dbReference type="SMR" id="Q3J5R9"/>
<dbReference type="STRING" id="272943.RSP_1719"/>
<dbReference type="EnsemblBacteria" id="ABA77865">
    <property type="protein sequence ID" value="ABA77865"/>
    <property type="gene ID" value="RSP_1719"/>
</dbReference>
<dbReference type="GeneID" id="67445503"/>
<dbReference type="KEGG" id="rsp:RSP_1719"/>
<dbReference type="PATRIC" id="fig|272943.9.peg.596"/>
<dbReference type="eggNOG" id="COG0090">
    <property type="taxonomic scope" value="Bacteria"/>
</dbReference>
<dbReference type="OrthoDB" id="9778722at2"/>
<dbReference type="PhylomeDB" id="Q3J5R9"/>
<dbReference type="Proteomes" id="UP000002703">
    <property type="component" value="Chromosome 1"/>
</dbReference>
<dbReference type="GO" id="GO:0015934">
    <property type="term" value="C:large ribosomal subunit"/>
    <property type="evidence" value="ECO:0007669"/>
    <property type="project" value="InterPro"/>
</dbReference>
<dbReference type="GO" id="GO:0019843">
    <property type="term" value="F:rRNA binding"/>
    <property type="evidence" value="ECO:0007669"/>
    <property type="project" value="UniProtKB-UniRule"/>
</dbReference>
<dbReference type="GO" id="GO:0003735">
    <property type="term" value="F:structural constituent of ribosome"/>
    <property type="evidence" value="ECO:0007669"/>
    <property type="project" value="InterPro"/>
</dbReference>
<dbReference type="GO" id="GO:0016740">
    <property type="term" value="F:transferase activity"/>
    <property type="evidence" value="ECO:0007669"/>
    <property type="project" value="InterPro"/>
</dbReference>
<dbReference type="GO" id="GO:0002181">
    <property type="term" value="P:cytoplasmic translation"/>
    <property type="evidence" value="ECO:0007669"/>
    <property type="project" value="TreeGrafter"/>
</dbReference>
<dbReference type="FunFam" id="2.30.30.30:FF:000001">
    <property type="entry name" value="50S ribosomal protein L2"/>
    <property type="match status" value="1"/>
</dbReference>
<dbReference type="FunFam" id="2.40.50.140:FF:000003">
    <property type="entry name" value="50S ribosomal protein L2"/>
    <property type="match status" value="1"/>
</dbReference>
<dbReference type="FunFam" id="4.10.950.10:FF:000001">
    <property type="entry name" value="50S ribosomal protein L2"/>
    <property type="match status" value="1"/>
</dbReference>
<dbReference type="Gene3D" id="2.30.30.30">
    <property type="match status" value="1"/>
</dbReference>
<dbReference type="Gene3D" id="2.40.50.140">
    <property type="entry name" value="Nucleic acid-binding proteins"/>
    <property type="match status" value="1"/>
</dbReference>
<dbReference type="Gene3D" id="4.10.950.10">
    <property type="entry name" value="Ribosomal protein L2, domain 3"/>
    <property type="match status" value="1"/>
</dbReference>
<dbReference type="HAMAP" id="MF_01320_B">
    <property type="entry name" value="Ribosomal_uL2_B"/>
    <property type="match status" value="1"/>
</dbReference>
<dbReference type="InterPro" id="IPR012340">
    <property type="entry name" value="NA-bd_OB-fold"/>
</dbReference>
<dbReference type="InterPro" id="IPR014722">
    <property type="entry name" value="Rib_uL2_dom2"/>
</dbReference>
<dbReference type="InterPro" id="IPR002171">
    <property type="entry name" value="Ribosomal_uL2"/>
</dbReference>
<dbReference type="InterPro" id="IPR005880">
    <property type="entry name" value="Ribosomal_uL2_bac/org-type"/>
</dbReference>
<dbReference type="InterPro" id="IPR022669">
    <property type="entry name" value="Ribosomal_uL2_C"/>
</dbReference>
<dbReference type="InterPro" id="IPR022671">
    <property type="entry name" value="Ribosomal_uL2_CS"/>
</dbReference>
<dbReference type="InterPro" id="IPR014726">
    <property type="entry name" value="Ribosomal_uL2_dom3"/>
</dbReference>
<dbReference type="InterPro" id="IPR022666">
    <property type="entry name" value="Ribosomal_uL2_RNA-bd_dom"/>
</dbReference>
<dbReference type="InterPro" id="IPR008991">
    <property type="entry name" value="Translation_prot_SH3-like_sf"/>
</dbReference>
<dbReference type="NCBIfam" id="TIGR01171">
    <property type="entry name" value="rplB_bact"/>
    <property type="match status" value="1"/>
</dbReference>
<dbReference type="PANTHER" id="PTHR13691:SF5">
    <property type="entry name" value="LARGE RIBOSOMAL SUBUNIT PROTEIN UL2M"/>
    <property type="match status" value="1"/>
</dbReference>
<dbReference type="PANTHER" id="PTHR13691">
    <property type="entry name" value="RIBOSOMAL PROTEIN L2"/>
    <property type="match status" value="1"/>
</dbReference>
<dbReference type="Pfam" id="PF00181">
    <property type="entry name" value="Ribosomal_L2"/>
    <property type="match status" value="1"/>
</dbReference>
<dbReference type="Pfam" id="PF03947">
    <property type="entry name" value="Ribosomal_L2_C"/>
    <property type="match status" value="1"/>
</dbReference>
<dbReference type="PIRSF" id="PIRSF002158">
    <property type="entry name" value="Ribosomal_L2"/>
    <property type="match status" value="1"/>
</dbReference>
<dbReference type="SMART" id="SM01383">
    <property type="entry name" value="Ribosomal_L2"/>
    <property type="match status" value="1"/>
</dbReference>
<dbReference type="SMART" id="SM01382">
    <property type="entry name" value="Ribosomal_L2_C"/>
    <property type="match status" value="1"/>
</dbReference>
<dbReference type="SUPFAM" id="SSF50249">
    <property type="entry name" value="Nucleic acid-binding proteins"/>
    <property type="match status" value="1"/>
</dbReference>
<dbReference type="SUPFAM" id="SSF50104">
    <property type="entry name" value="Translation proteins SH3-like domain"/>
    <property type="match status" value="1"/>
</dbReference>
<dbReference type="PROSITE" id="PS00467">
    <property type="entry name" value="RIBOSOMAL_L2"/>
    <property type="match status" value="1"/>
</dbReference>
<proteinExistence type="inferred from homology"/>
<sequence>MALKSYKPTTPGQRGLVLIDRSELWKGRPVKTLVEGLIKTGGRNNTGRVTMWHKGGGAKRLYRIVDFKRRKFDVPAVVERIEYDPNRTAFIALVRYEDGELAYILAPQRLAVGDSVVAGVKTDVKPGNAMPFSGMPIGTIVHNVELKPGKGGQLARAAGTYAQFVGRDGGYAQIRLSSGELRMVRQECMATVGAVSNPDNSNQNFGKAGRMRHKGVRPTVRGVAMNPIDHPHGGGEGRTSGGRHPVTPWGKGTKGNRTRKSKASDKLIVRSRHAKKKGR</sequence>
<feature type="chain" id="PRO_0000237233" description="Large ribosomal subunit protein uL2">
    <location>
        <begin position="1"/>
        <end position="279"/>
    </location>
</feature>
<feature type="region of interest" description="Disordered" evidence="2">
    <location>
        <begin position="224"/>
        <end position="279"/>
    </location>
</feature>
<feature type="compositionally biased region" description="Basic residues" evidence="2">
    <location>
        <begin position="269"/>
        <end position="279"/>
    </location>
</feature>
<organism>
    <name type="scientific">Cereibacter sphaeroides (strain ATCC 17023 / DSM 158 / JCM 6121 / CCUG 31486 / LMG 2827 / NBRC 12203 / NCIMB 8253 / ATH 2.4.1.)</name>
    <name type="common">Rhodobacter sphaeroides</name>
    <dbReference type="NCBI Taxonomy" id="272943"/>
    <lineage>
        <taxon>Bacteria</taxon>
        <taxon>Pseudomonadati</taxon>
        <taxon>Pseudomonadota</taxon>
        <taxon>Alphaproteobacteria</taxon>
        <taxon>Rhodobacterales</taxon>
        <taxon>Paracoccaceae</taxon>
        <taxon>Cereibacter</taxon>
    </lineage>
</organism>
<name>RL2_CERS4</name>
<accession>Q3J5R9</accession>
<evidence type="ECO:0000255" key="1">
    <source>
        <dbReference type="HAMAP-Rule" id="MF_01320"/>
    </source>
</evidence>
<evidence type="ECO:0000256" key="2">
    <source>
        <dbReference type="SAM" id="MobiDB-lite"/>
    </source>
</evidence>
<evidence type="ECO:0000305" key="3"/>
<comment type="function">
    <text evidence="1">One of the primary rRNA binding proteins. Required for association of the 30S and 50S subunits to form the 70S ribosome, for tRNA binding and peptide bond formation. It has been suggested to have peptidyltransferase activity; this is somewhat controversial. Makes several contacts with the 16S rRNA in the 70S ribosome.</text>
</comment>
<comment type="subunit">
    <text evidence="1">Part of the 50S ribosomal subunit. Forms a bridge to the 30S subunit in the 70S ribosome.</text>
</comment>
<comment type="similarity">
    <text evidence="1">Belongs to the universal ribosomal protein uL2 family.</text>
</comment>
<gene>
    <name evidence="1" type="primary">rplB</name>
    <name type="ordered locus">RHOS4_02970</name>
    <name type="ORF">RSP_1719</name>
</gene>
<protein>
    <recommendedName>
        <fullName evidence="1">Large ribosomal subunit protein uL2</fullName>
    </recommendedName>
    <alternativeName>
        <fullName evidence="3">50S ribosomal protein L2</fullName>
    </alternativeName>
</protein>